<comment type="function">
    <text evidence="1">Catalyzes the phosphorylation of D-glycero-D-manno-heptose 7-phosphate at the C-1 position to selectively form D-glycero-beta-D-manno-heptose-1,7-bisphosphate.</text>
</comment>
<comment type="function">
    <text evidence="1">Catalyzes the ADP transfer from ATP to D-glycero-beta-D-manno-heptose 1-phosphate, yielding ADP-D-glycero-beta-D-manno-heptose.</text>
</comment>
<comment type="catalytic activity">
    <reaction evidence="1">
        <text>D-glycero-beta-D-manno-heptose 7-phosphate + ATP = D-glycero-beta-D-manno-heptose 1,7-bisphosphate + ADP + H(+)</text>
        <dbReference type="Rhea" id="RHEA:27473"/>
        <dbReference type="ChEBI" id="CHEBI:15378"/>
        <dbReference type="ChEBI" id="CHEBI:30616"/>
        <dbReference type="ChEBI" id="CHEBI:60204"/>
        <dbReference type="ChEBI" id="CHEBI:60208"/>
        <dbReference type="ChEBI" id="CHEBI:456216"/>
        <dbReference type="EC" id="2.7.1.167"/>
    </reaction>
</comment>
<comment type="catalytic activity">
    <reaction evidence="1">
        <text>D-glycero-beta-D-manno-heptose 1-phosphate + ATP + H(+) = ADP-D-glycero-beta-D-manno-heptose + diphosphate</text>
        <dbReference type="Rhea" id="RHEA:27465"/>
        <dbReference type="ChEBI" id="CHEBI:15378"/>
        <dbReference type="ChEBI" id="CHEBI:30616"/>
        <dbReference type="ChEBI" id="CHEBI:33019"/>
        <dbReference type="ChEBI" id="CHEBI:59967"/>
        <dbReference type="ChEBI" id="CHEBI:61593"/>
        <dbReference type="EC" id="2.7.7.70"/>
    </reaction>
</comment>
<comment type="pathway">
    <text evidence="1">Nucleotide-sugar biosynthesis; ADP-L-glycero-beta-D-manno-heptose biosynthesis; ADP-L-glycero-beta-D-manno-heptose from D-glycero-beta-D-manno-heptose 7-phosphate: step 1/4.</text>
</comment>
<comment type="pathway">
    <text evidence="1">Nucleotide-sugar biosynthesis; ADP-L-glycero-beta-D-manno-heptose biosynthesis; ADP-L-glycero-beta-D-manno-heptose from D-glycero-beta-D-manno-heptose 7-phosphate: step 3/4.</text>
</comment>
<comment type="subunit">
    <text evidence="1">Homodimer.</text>
</comment>
<comment type="similarity">
    <text evidence="1">In the N-terminal section; belongs to the carbohydrate kinase PfkB family.</text>
</comment>
<comment type="similarity">
    <text evidence="1">In the C-terminal section; belongs to the cytidylyltransferase family.</text>
</comment>
<sequence length="479" mass="49173">MLAETQLAPIAVIGDVMVDRYITGSVSRISPEAPVPVLVHGAERIVPGGAANVAANAAALGAPVLLVGLVGEDEAASQLADALATYPGISLAHMVVDAKRPTITKTRVMSGRQQIVRIDAEVTRACDAAEEAALIGAAEAAIAKAGVVVLSDYAKGVLSDAVIAAAMAAAKARNVPVIVDPKRRTFEAYRGATLVTPNRRELAEATGLPDETDADAARAAEAAGRQFGGDVLVTRAEKGMTLWRQDGRVLHVPAEAREVFDVSGAGDTALAALAVSLAGGQSLEASVGIANAAAALAVAKLGTAVVTRAELRAALERTAAQIAPPGALVSREDACAVVAAWKAQGLRVVFTNGCFDLVHPGHVSLLEQSAAQGDRLVVALNTDASVRRLKGPSRPLQDEQARARVMGAMRCVDLVVLFDEETPLETIKALLPDVLVKGADYAPHEVVGADVVTANGGELVLVDLVAGKSTSSLVAKART</sequence>
<name>HLDE_AZOC5</name>
<protein>
    <recommendedName>
        <fullName evidence="1">Bifunctional protein HldE</fullName>
    </recommendedName>
    <domain>
        <recommendedName>
            <fullName evidence="1">D-beta-D-heptose 7-phosphate kinase</fullName>
            <ecNumber evidence="1">2.7.1.167</ecNumber>
        </recommendedName>
        <alternativeName>
            <fullName evidence="1">D-beta-D-heptose 7-phosphotransferase</fullName>
        </alternativeName>
        <alternativeName>
            <fullName evidence="1">D-glycero-beta-D-manno-heptose-7-phosphate kinase</fullName>
        </alternativeName>
    </domain>
    <domain>
        <recommendedName>
            <fullName evidence="1">D-beta-D-heptose 1-phosphate adenylyltransferase</fullName>
            <ecNumber evidence="1">2.7.7.70</ecNumber>
        </recommendedName>
        <alternativeName>
            <fullName evidence="1">D-glycero-beta-D-manno-heptose 1-phosphate adenylyltransferase</fullName>
        </alternativeName>
    </domain>
</protein>
<feature type="chain" id="PRO_1000073625" description="Bifunctional protein HldE">
    <location>
        <begin position="1"/>
        <end position="479"/>
    </location>
</feature>
<feature type="region of interest" description="Ribokinase">
    <location>
        <begin position="1"/>
        <end position="322"/>
    </location>
</feature>
<feature type="region of interest" description="Cytidylyltransferase">
    <location>
        <begin position="350"/>
        <end position="479"/>
    </location>
</feature>
<feature type="active site" evidence="1">
    <location>
        <position position="267"/>
    </location>
</feature>
<feature type="binding site" evidence="1">
    <location>
        <begin position="198"/>
        <end position="201"/>
    </location>
    <ligand>
        <name>ATP</name>
        <dbReference type="ChEBI" id="CHEBI:30616"/>
    </ligand>
</feature>
<organism>
    <name type="scientific">Azorhizobium caulinodans (strain ATCC 43989 / DSM 5975 / JCM 20966 / LMG 6465 / NBRC 14845 / NCIMB 13405 / ORS 571)</name>
    <dbReference type="NCBI Taxonomy" id="438753"/>
    <lineage>
        <taxon>Bacteria</taxon>
        <taxon>Pseudomonadati</taxon>
        <taxon>Pseudomonadota</taxon>
        <taxon>Alphaproteobacteria</taxon>
        <taxon>Hyphomicrobiales</taxon>
        <taxon>Xanthobacteraceae</taxon>
        <taxon>Azorhizobium</taxon>
    </lineage>
</organism>
<keyword id="KW-0067">ATP-binding</keyword>
<keyword id="KW-0119">Carbohydrate metabolism</keyword>
<keyword id="KW-0418">Kinase</keyword>
<keyword id="KW-0511">Multifunctional enzyme</keyword>
<keyword id="KW-0547">Nucleotide-binding</keyword>
<keyword id="KW-0548">Nucleotidyltransferase</keyword>
<keyword id="KW-1185">Reference proteome</keyword>
<keyword id="KW-0808">Transferase</keyword>
<reference key="1">
    <citation type="submission" date="2007-04" db="EMBL/GenBank/DDBJ databases">
        <title>Complete genome sequence of the nitrogen-fixing bacterium Azorhizobium caulinodans ORS571.</title>
        <authorList>
            <person name="Lee K.B."/>
            <person name="Backer P.D."/>
            <person name="Aono T."/>
            <person name="Liu C.T."/>
            <person name="Suzuki S."/>
            <person name="Suzuki T."/>
            <person name="Kaneko T."/>
            <person name="Yamada M."/>
            <person name="Tabata S."/>
            <person name="Kupfer D.M."/>
            <person name="Najar F.Z."/>
            <person name="Wiley G.B."/>
            <person name="Roe B."/>
            <person name="Binnewies T."/>
            <person name="Ussery D."/>
            <person name="Vereecke D."/>
            <person name="Gevers D."/>
            <person name="Holsters M."/>
            <person name="Oyaizu H."/>
        </authorList>
    </citation>
    <scope>NUCLEOTIDE SEQUENCE [LARGE SCALE GENOMIC DNA]</scope>
    <source>
        <strain>ATCC 43989 / DSM 5975 / JCM 20966 / LMG 6465 / NBRC 14845 / NCIMB 13405 / ORS 571</strain>
    </source>
</reference>
<gene>
    <name evidence="1" type="primary">hldE</name>
    <name type="ordered locus">AZC_2254</name>
</gene>
<proteinExistence type="inferred from homology"/>
<accession>A8I5B0</accession>
<dbReference type="EC" id="2.7.1.167" evidence="1"/>
<dbReference type="EC" id="2.7.7.70" evidence="1"/>
<dbReference type="EMBL" id="AP009384">
    <property type="protein sequence ID" value="BAF88252.1"/>
    <property type="molecule type" value="Genomic_DNA"/>
</dbReference>
<dbReference type="RefSeq" id="WP_012170781.1">
    <property type="nucleotide sequence ID" value="NC_009937.1"/>
</dbReference>
<dbReference type="SMR" id="A8I5B0"/>
<dbReference type="STRING" id="438753.AZC_2254"/>
<dbReference type="KEGG" id="azc:AZC_2254"/>
<dbReference type="eggNOG" id="COG0615">
    <property type="taxonomic scope" value="Bacteria"/>
</dbReference>
<dbReference type="eggNOG" id="COG2870">
    <property type="taxonomic scope" value="Bacteria"/>
</dbReference>
<dbReference type="HOGENOM" id="CLU_021150_2_1_5"/>
<dbReference type="UniPathway" id="UPA00356">
    <property type="reaction ID" value="UER00437"/>
</dbReference>
<dbReference type="UniPathway" id="UPA00356">
    <property type="reaction ID" value="UER00439"/>
</dbReference>
<dbReference type="Proteomes" id="UP000000270">
    <property type="component" value="Chromosome"/>
</dbReference>
<dbReference type="GO" id="GO:0005829">
    <property type="term" value="C:cytosol"/>
    <property type="evidence" value="ECO:0007669"/>
    <property type="project" value="TreeGrafter"/>
</dbReference>
<dbReference type="GO" id="GO:0005524">
    <property type="term" value="F:ATP binding"/>
    <property type="evidence" value="ECO:0007669"/>
    <property type="project" value="UniProtKB-UniRule"/>
</dbReference>
<dbReference type="GO" id="GO:0033785">
    <property type="term" value="F:heptose 7-phosphate kinase activity"/>
    <property type="evidence" value="ECO:0007669"/>
    <property type="project" value="UniProtKB-UniRule"/>
</dbReference>
<dbReference type="GO" id="GO:0033786">
    <property type="term" value="F:heptose-1-phosphate adenylyltransferase activity"/>
    <property type="evidence" value="ECO:0007669"/>
    <property type="project" value="UniProtKB-UniRule"/>
</dbReference>
<dbReference type="GO" id="GO:0016773">
    <property type="term" value="F:phosphotransferase activity, alcohol group as acceptor"/>
    <property type="evidence" value="ECO:0007669"/>
    <property type="project" value="InterPro"/>
</dbReference>
<dbReference type="GO" id="GO:0097171">
    <property type="term" value="P:ADP-L-glycero-beta-D-manno-heptose biosynthetic process"/>
    <property type="evidence" value="ECO:0007669"/>
    <property type="project" value="UniProtKB-UniPathway"/>
</dbReference>
<dbReference type="Gene3D" id="3.40.1190.20">
    <property type="match status" value="1"/>
</dbReference>
<dbReference type="Gene3D" id="3.40.50.620">
    <property type="entry name" value="HUPs"/>
    <property type="match status" value="1"/>
</dbReference>
<dbReference type="HAMAP" id="MF_01603">
    <property type="entry name" value="HldE"/>
    <property type="match status" value="1"/>
</dbReference>
<dbReference type="InterPro" id="IPR023030">
    <property type="entry name" value="Bifunc_HldE"/>
</dbReference>
<dbReference type="InterPro" id="IPR002173">
    <property type="entry name" value="Carboh/pur_kinase_PfkB_CS"/>
</dbReference>
<dbReference type="InterPro" id="IPR004821">
    <property type="entry name" value="Cyt_trans-like"/>
</dbReference>
<dbReference type="InterPro" id="IPR011611">
    <property type="entry name" value="PfkB_dom"/>
</dbReference>
<dbReference type="InterPro" id="IPR011913">
    <property type="entry name" value="RfaE_dom_I"/>
</dbReference>
<dbReference type="InterPro" id="IPR011914">
    <property type="entry name" value="RfaE_dom_II"/>
</dbReference>
<dbReference type="InterPro" id="IPR029056">
    <property type="entry name" value="Ribokinase-like"/>
</dbReference>
<dbReference type="InterPro" id="IPR014729">
    <property type="entry name" value="Rossmann-like_a/b/a_fold"/>
</dbReference>
<dbReference type="NCBIfam" id="TIGR00125">
    <property type="entry name" value="cyt_tran_rel"/>
    <property type="match status" value="1"/>
</dbReference>
<dbReference type="NCBIfam" id="TIGR02198">
    <property type="entry name" value="rfaE_dom_I"/>
    <property type="match status" value="1"/>
</dbReference>
<dbReference type="NCBIfam" id="TIGR02199">
    <property type="entry name" value="rfaE_dom_II"/>
    <property type="match status" value="1"/>
</dbReference>
<dbReference type="PANTHER" id="PTHR46969">
    <property type="entry name" value="BIFUNCTIONAL PROTEIN HLDE"/>
    <property type="match status" value="1"/>
</dbReference>
<dbReference type="PANTHER" id="PTHR46969:SF1">
    <property type="entry name" value="BIFUNCTIONAL PROTEIN HLDE"/>
    <property type="match status" value="1"/>
</dbReference>
<dbReference type="Pfam" id="PF01467">
    <property type="entry name" value="CTP_transf_like"/>
    <property type="match status" value="1"/>
</dbReference>
<dbReference type="Pfam" id="PF00294">
    <property type="entry name" value="PfkB"/>
    <property type="match status" value="1"/>
</dbReference>
<dbReference type="SUPFAM" id="SSF52374">
    <property type="entry name" value="Nucleotidylyl transferase"/>
    <property type="match status" value="1"/>
</dbReference>
<dbReference type="SUPFAM" id="SSF53613">
    <property type="entry name" value="Ribokinase-like"/>
    <property type="match status" value="1"/>
</dbReference>
<dbReference type="PROSITE" id="PS00584">
    <property type="entry name" value="PFKB_KINASES_2"/>
    <property type="match status" value="1"/>
</dbReference>
<evidence type="ECO:0000255" key="1">
    <source>
        <dbReference type="HAMAP-Rule" id="MF_01603"/>
    </source>
</evidence>